<name>RF1_HALSA</name>
<keyword id="KW-0963">Cytoplasm</keyword>
<keyword id="KW-0648">Protein biosynthesis</keyword>
<keyword id="KW-1185">Reference proteome</keyword>
<proteinExistence type="inferred from homology"/>
<feature type="chain" id="PRO_0000143171" description="Peptide chain release factor subunit 1">
    <location>
        <begin position="1"/>
        <end position="416"/>
    </location>
</feature>
<sequence>MSEQDEVPSEDRRKYEFRKVIEELKDYEGSGTQLVTIYIPPDKQISDVVAHVTQEHSEASNIKSKQTRTNVQDALTSIKDRLRYYDTFPPDNGMVVFSGAVDSGGGRTDMVTEVLESPPQPIESFRYHCDSAFLTEPLAEMLGDKGLYGLIVLDRRESNVGWLKGKRVQPVKSAESLVPGKQRKGGQSAQRFARLRLEAIDNFYQEVAGMADDLFVPKRHEIDGILVGGPSPTKDEFLDGDYLHHELQDKVLGKFDVSYTDESGLSDLVDAGQAALAEADLMDDKSDMEEFFEELNGGKLATYGFEQTRRNLIMGSVDRLLVSEDLREDVVIYECPNDHEEYETIDRRNTSPEHTCSDCGEEATEVDREDAIDHLMSIADQRGTETHFISTDFEKGEQLLTAFGGYAGILRYSTGV</sequence>
<evidence type="ECO:0000250" key="1"/>
<evidence type="ECO:0000305" key="2"/>
<accession>Q9HNF0</accession>
<dbReference type="EMBL" id="AE004437">
    <property type="protein sequence ID" value="AAG20270.1"/>
    <property type="status" value="ALT_INIT"/>
    <property type="molecule type" value="Genomic_DNA"/>
</dbReference>
<dbReference type="PIR" id="B84363">
    <property type="entry name" value="B84363"/>
</dbReference>
<dbReference type="RefSeq" id="WP_012289438.1">
    <property type="nucleotide sequence ID" value="NC_002607.1"/>
</dbReference>
<dbReference type="SMR" id="Q9HNF0"/>
<dbReference type="FunCoup" id="Q9HNF0">
    <property type="interactions" value="203"/>
</dbReference>
<dbReference type="STRING" id="64091.VNG_2131G"/>
<dbReference type="PaxDb" id="64091-VNG_2131G"/>
<dbReference type="GeneID" id="89350291"/>
<dbReference type="KEGG" id="hal:VNG_2131G"/>
<dbReference type="PATRIC" id="fig|64091.14.peg.1629"/>
<dbReference type="HOGENOM" id="CLU_035759_3_0_2"/>
<dbReference type="InParanoid" id="Q9HNF0"/>
<dbReference type="OrthoDB" id="1011at2157"/>
<dbReference type="PhylomeDB" id="Q9HNF0"/>
<dbReference type="Proteomes" id="UP000000554">
    <property type="component" value="Chromosome"/>
</dbReference>
<dbReference type="GO" id="GO:0005829">
    <property type="term" value="C:cytosol"/>
    <property type="evidence" value="ECO:0000318"/>
    <property type="project" value="GO_Central"/>
</dbReference>
<dbReference type="GO" id="GO:0018444">
    <property type="term" value="C:translation release factor complex"/>
    <property type="evidence" value="ECO:0000318"/>
    <property type="project" value="GO_Central"/>
</dbReference>
<dbReference type="GO" id="GO:1990825">
    <property type="term" value="F:sequence-specific mRNA binding"/>
    <property type="evidence" value="ECO:0000318"/>
    <property type="project" value="GO_Central"/>
</dbReference>
<dbReference type="GO" id="GO:0016149">
    <property type="term" value="F:translation release factor activity, codon specific"/>
    <property type="evidence" value="ECO:0000318"/>
    <property type="project" value="GO_Central"/>
</dbReference>
<dbReference type="FunFam" id="3.30.420.60:FF:000003">
    <property type="entry name" value="Peptide chain release factor subunit 1"/>
    <property type="match status" value="1"/>
</dbReference>
<dbReference type="FunFam" id="3.30.960.10:FF:000003">
    <property type="entry name" value="Peptide chain release factor subunit 1"/>
    <property type="match status" value="1"/>
</dbReference>
<dbReference type="Gene3D" id="1.20.5.170">
    <property type="match status" value="1"/>
</dbReference>
<dbReference type="Gene3D" id="3.30.1330.30">
    <property type="match status" value="1"/>
</dbReference>
<dbReference type="Gene3D" id="3.30.960.10">
    <property type="entry name" value="eRF1 domain 1"/>
    <property type="match status" value="1"/>
</dbReference>
<dbReference type="Gene3D" id="3.30.420.60">
    <property type="entry name" value="eRF1 domain 2"/>
    <property type="match status" value="1"/>
</dbReference>
<dbReference type="HAMAP" id="MF_00424">
    <property type="entry name" value="Rel_fact_arch_1"/>
    <property type="match status" value="1"/>
</dbReference>
<dbReference type="InterPro" id="IPR042226">
    <property type="entry name" value="eFR1_2_sf"/>
</dbReference>
<dbReference type="InterPro" id="IPR005140">
    <property type="entry name" value="eRF1_1_Pelota"/>
</dbReference>
<dbReference type="InterPro" id="IPR024049">
    <property type="entry name" value="eRF1_1_sf"/>
</dbReference>
<dbReference type="InterPro" id="IPR005141">
    <property type="entry name" value="eRF1_2"/>
</dbReference>
<dbReference type="InterPro" id="IPR005142">
    <property type="entry name" value="eRF1_3"/>
</dbReference>
<dbReference type="InterPro" id="IPR020918">
    <property type="entry name" value="Peptide_chain-rel_aRF1"/>
</dbReference>
<dbReference type="InterPro" id="IPR004403">
    <property type="entry name" value="Peptide_chain-rel_eRF1/aRF1"/>
</dbReference>
<dbReference type="InterPro" id="IPR029064">
    <property type="entry name" value="Ribosomal_eL30-like_sf"/>
</dbReference>
<dbReference type="NCBIfam" id="TIGR03676">
    <property type="entry name" value="aRF1_eRF1"/>
    <property type="match status" value="1"/>
</dbReference>
<dbReference type="PANTHER" id="PTHR10113">
    <property type="entry name" value="PEPTIDE CHAIN RELEASE FACTOR SUBUNIT 1"/>
    <property type="match status" value="1"/>
</dbReference>
<dbReference type="Pfam" id="PF03463">
    <property type="entry name" value="eRF1_1"/>
    <property type="match status" value="1"/>
</dbReference>
<dbReference type="Pfam" id="PF03464">
    <property type="entry name" value="eRF1_2"/>
    <property type="match status" value="1"/>
</dbReference>
<dbReference type="Pfam" id="PF03465">
    <property type="entry name" value="eRF1_3"/>
    <property type="match status" value="1"/>
</dbReference>
<dbReference type="SMART" id="SM01194">
    <property type="entry name" value="eRF1_1"/>
    <property type="match status" value="1"/>
</dbReference>
<dbReference type="SUPFAM" id="SSF55315">
    <property type="entry name" value="L30e-like"/>
    <property type="match status" value="1"/>
</dbReference>
<dbReference type="SUPFAM" id="SSF55481">
    <property type="entry name" value="N-terminal domain of eukaryotic peptide chain release factor subunit 1, ERF1"/>
    <property type="match status" value="1"/>
</dbReference>
<dbReference type="SUPFAM" id="SSF53137">
    <property type="entry name" value="Translational machinery components"/>
    <property type="match status" value="1"/>
</dbReference>
<organism>
    <name type="scientific">Halobacterium salinarum (strain ATCC 700922 / JCM 11081 / NRC-1)</name>
    <name type="common">Halobacterium halobium</name>
    <dbReference type="NCBI Taxonomy" id="64091"/>
    <lineage>
        <taxon>Archaea</taxon>
        <taxon>Methanobacteriati</taxon>
        <taxon>Methanobacteriota</taxon>
        <taxon>Stenosarchaea group</taxon>
        <taxon>Halobacteria</taxon>
        <taxon>Halobacteriales</taxon>
        <taxon>Halobacteriaceae</taxon>
        <taxon>Halobacterium</taxon>
        <taxon>Halobacterium salinarum NRC-34001</taxon>
    </lineage>
</organism>
<comment type="function">
    <text evidence="1">Directs the termination of nascent peptide synthesis (translation) in response to the termination codons UAA, UAG and UGA.</text>
</comment>
<comment type="subunit">
    <text evidence="1">Heterodimer of two subunits, one of which binds GTP.</text>
</comment>
<comment type="subcellular location">
    <subcellularLocation>
        <location evidence="2">Cytoplasm</location>
    </subcellularLocation>
</comment>
<comment type="similarity">
    <text evidence="2">Belongs to the eukaryotic release factor 1 family.</text>
</comment>
<comment type="sequence caution" evidence="2">
    <conflict type="erroneous initiation">
        <sequence resource="EMBL-CDS" id="AAG20270"/>
    </conflict>
</comment>
<gene>
    <name type="primary">prf1</name>
    <name type="ordered locus">VNG_2131G</name>
</gene>
<reference key="1">
    <citation type="journal article" date="2000" name="Proc. Natl. Acad. Sci. U.S.A.">
        <title>Genome sequence of Halobacterium species NRC-1.</title>
        <authorList>
            <person name="Ng W.V."/>
            <person name="Kennedy S.P."/>
            <person name="Mahairas G.G."/>
            <person name="Berquist B."/>
            <person name="Pan M."/>
            <person name="Shukla H.D."/>
            <person name="Lasky S.R."/>
            <person name="Baliga N.S."/>
            <person name="Thorsson V."/>
            <person name="Sbrogna J."/>
            <person name="Swartzell S."/>
            <person name="Weir D."/>
            <person name="Hall J."/>
            <person name="Dahl T.A."/>
            <person name="Welti R."/>
            <person name="Goo Y.A."/>
            <person name="Leithauser B."/>
            <person name="Keller K."/>
            <person name="Cruz R."/>
            <person name="Danson M.J."/>
            <person name="Hough D.W."/>
            <person name="Maddocks D.G."/>
            <person name="Jablonski P.E."/>
            <person name="Krebs M.P."/>
            <person name="Angevine C.M."/>
            <person name="Dale H."/>
            <person name="Isenbarger T.A."/>
            <person name="Peck R.F."/>
            <person name="Pohlschroder M."/>
            <person name="Spudich J.L."/>
            <person name="Jung K.-H."/>
            <person name="Alam M."/>
            <person name="Freitas T."/>
            <person name="Hou S."/>
            <person name="Daniels C.J."/>
            <person name="Dennis P.P."/>
            <person name="Omer A.D."/>
            <person name="Ebhardt H."/>
            <person name="Lowe T.M."/>
            <person name="Liang P."/>
            <person name="Riley M."/>
            <person name="Hood L."/>
            <person name="DasSarma S."/>
        </authorList>
    </citation>
    <scope>NUCLEOTIDE SEQUENCE [LARGE SCALE GENOMIC DNA]</scope>
    <source>
        <strain>ATCC 700922 / JCM 11081 / NRC-1</strain>
    </source>
</reference>
<protein>
    <recommendedName>
        <fullName>Peptide chain release factor subunit 1</fullName>
    </recommendedName>
    <alternativeName>
        <fullName>Translation termination factor aRF1</fullName>
    </alternativeName>
</protein>